<keyword id="KW-0157">Chromophore</keyword>
<keyword id="KW-0903">Direct protein sequencing</keyword>
<keyword id="KW-0600">Photoreceptor protein</keyword>
<keyword id="KW-0675">Receptor</keyword>
<keyword id="KW-0716">Sensory transduction</keyword>
<evidence type="ECO:0000250" key="1"/>
<evidence type="ECO:0000255" key="2">
    <source>
        <dbReference type="PROSITE-ProRule" id="PRU00140"/>
    </source>
</evidence>
<evidence type="ECO:0000305" key="3"/>
<name>PYP_HALSE</name>
<sequence length="125" mass="14063">MNIVHFGSDDIENSLANMSDQDLNQLAFGAIQLDASGKVLQYNAAEEGITGRDPKSVIGKNFFEDVAPCTKSQEFQGRFKEGVANGNLATMFEYVFDYQMKPTKVKVHMKKALVDDSYWIFVKRL</sequence>
<proteinExistence type="evidence at protein level"/>
<accession>P81046</accession>
<gene>
    <name type="primary">pyp</name>
</gene>
<reference key="1">
    <citation type="journal article" date="1996" name="Biochemistry">
        <title>Sequence evidence for strong conservation of the photoactive yellow proteins from the halophilic phototrophic bacteria Chromatium salexigens and Rhodospirillum salexigens.</title>
        <authorList>
            <person name="Koh M."/>
            <person name="van Driessche G."/>
            <person name="Samyn B."/>
            <person name="Hoff W.D."/>
            <person name="Meyer T.E."/>
            <person name="Cusanovich M.A."/>
            <person name="van Beeumen J.J."/>
        </authorList>
    </citation>
    <scope>PROTEIN SEQUENCE</scope>
</reference>
<protein>
    <recommendedName>
        <fullName>Photoactive yellow protein</fullName>
        <shortName>PYP</shortName>
    </recommendedName>
</protein>
<comment type="function">
    <text evidence="1">Photoactive blue light protein. Probably functions as a photoreceptor for a negative phototaxis response (By similarity).</text>
</comment>
<comment type="PTM">
    <text>The 4-hydroxycinnamic acid (p-coumaric acid) chromophore is covalently bound via a thioester linkage.</text>
</comment>
<comment type="similarity">
    <text evidence="3">Belongs to the photoactive yellow protein family.</text>
</comment>
<organism>
    <name type="scientific">Halochromatium salexigens</name>
    <name type="common">Chromatium salexigens</name>
    <dbReference type="NCBI Taxonomy" id="49447"/>
    <lineage>
        <taxon>Bacteria</taxon>
        <taxon>Pseudomonadati</taxon>
        <taxon>Pseudomonadota</taxon>
        <taxon>Gammaproteobacteria</taxon>
        <taxon>Chromatiales</taxon>
        <taxon>Chromatiaceae</taxon>
        <taxon>Halochromatium</taxon>
    </lineage>
</organism>
<dbReference type="SMR" id="P81046"/>
<dbReference type="GO" id="GO:0009881">
    <property type="term" value="F:photoreceptor activity"/>
    <property type="evidence" value="ECO:0007669"/>
    <property type="project" value="UniProtKB-KW"/>
</dbReference>
<dbReference type="GO" id="GO:0007602">
    <property type="term" value="P:phototransduction"/>
    <property type="evidence" value="ECO:0007669"/>
    <property type="project" value="InterPro"/>
</dbReference>
<dbReference type="GO" id="GO:0006355">
    <property type="term" value="P:regulation of DNA-templated transcription"/>
    <property type="evidence" value="ECO:0007669"/>
    <property type="project" value="InterPro"/>
</dbReference>
<dbReference type="CDD" id="cd00130">
    <property type="entry name" value="PAS"/>
    <property type="match status" value="1"/>
</dbReference>
<dbReference type="Gene3D" id="3.30.450.20">
    <property type="entry name" value="PAS domain"/>
    <property type="match status" value="1"/>
</dbReference>
<dbReference type="InterPro" id="IPR000014">
    <property type="entry name" value="PAS"/>
</dbReference>
<dbReference type="InterPro" id="IPR035965">
    <property type="entry name" value="PAS-like_dom_sf"/>
</dbReference>
<dbReference type="InterPro" id="IPR013767">
    <property type="entry name" value="PAS_fold"/>
</dbReference>
<dbReference type="InterPro" id="IPR012130">
    <property type="entry name" value="PYP"/>
</dbReference>
<dbReference type="NCBIfam" id="TIGR02373">
    <property type="entry name" value="photo_yellow"/>
    <property type="match status" value="1"/>
</dbReference>
<dbReference type="Pfam" id="PF00989">
    <property type="entry name" value="PAS"/>
    <property type="match status" value="1"/>
</dbReference>
<dbReference type="PIRSF" id="PIRSF000087">
    <property type="entry name" value="PYP"/>
    <property type="match status" value="1"/>
</dbReference>
<dbReference type="SUPFAM" id="SSF55785">
    <property type="entry name" value="PYP-like sensor domain (PAS domain)"/>
    <property type="match status" value="1"/>
</dbReference>
<dbReference type="PROSITE" id="PS50112">
    <property type="entry name" value="PAS"/>
    <property type="match status" value="1"/>
</dbReference>
<feature type="chain" id="PRO_0000144913" description="Photoactive yellow protein">
    <location>
        <begin position="1"/>
        <end position="125"/>
    </location>
</feature>
<feature type="domain" description="PAS" evidence="2">
    <location>
        <begin position="23"/>
        <end position="86"/>
    </location>
</feature>
<feature type="modified residue" description="S-(4-hydroxycinnamyl)cysteine">
    <location>
        <position position="69"/>
    </location>
</feature>